<organism>
    <name type="scientific">Pan troglodytes</name>
    <name type="common">Chimpanzee</name>
    <dbReference type="NCBI Taxonomy" id="9598"/>
    <lineage>
        <taxon>Eukaryota</taxon>
        <taxon>Metazoa</taxon>
        <taxon>Chordata</taxon>
        <taxon>Craniata</taxon>
        <taxon>Vertebrata</taxon>
        <taxon>Euteleostomi</taxon>
        <taxon>Mammalia</taxon>
        <taxon>Eutheria</taxon>
        <taxon>Euarchontoglires</taxon>
        <taxon>Primates</taxon>
        <taxon>Haplorrhini</taxon>
        <taxon>Catarrhini</taxon>
        <taxon>Hominidae</taxon>
        <taxon>Pan</taxon>
    </lineage>
</organism>
<keyword id="KW-0004">4Fe-4S</keyword>
<keyword id="KW-0249">Electron transport</keyword>
<keyword id="KW-0408">Iron</keyword>
<keyword id="KW-0411">Iron-sulfur</keyword>
<keyword id="KW-0472">Membrane</keyword>
<keyword id="KW-0479">Metal-binding</keyword>
<keyword id="KW-0496">Mitochondrion</keyword>
<keyword id="KW-0999">Mitochondrion inner membrane</keyword>
<keyword id="KW-0520">NAD</keyword>
<keyword id="KW-0560">Oxidoreductase</keyword>
<keyword id="KW-1185">Reference proteome</keyword>
<keyword id="KW-0677">Repeat</keyword>
<keyword id="KW-0679">Respiratory chain</keyword>
<keyword id="KW-0809">Transit peptide</keyword>
<keyword id="KW-1278">Translocase</keyword>
<keyword id="KW-0813">Transport</keyword>
<keyword id="KW-0830">Ubiquinone</keyword>
<evidence type="ECO:0000250" key="1">
    <source>
        <dbReference type="UniProtKB" id="O00217"/>
    </source>
</evidence>
<evidence type="ECO:0000250" key="2">
    <source>
        <dbReference type="UniProtKB" id="P42028"/>
    </source>
</evidence>
<evidence type="ECO:0000250" key="3">
    <source>
        <dbReference type="UniProtKB" id="Q56224"/>
    </source>
</evidence>
<evidence type="ECO:0000255" key="4"/>
<evidence type="ECO:0000255" key="5">
    <source>
        <dbReference type="PROSITE-ProRule" id="PRU00711"/>
    </source>
</evidence>
<evidence type="ECO:0000305" key="6"/>
<protein>
    <recommendedName>
        <fullName>NADH dehydrogenase [ubiquinone] iron-sulfur protein 8, mitochondrial</fullName>
        <ecNumber evidence="1">7.1.1.2</ecNumber>
    </recommendedName>
    <alternativeName>
        <fullName>Complex I-23kD</fullName>
        <shortName>CI-23kD</shortName>
    </alternativeName>
    <alternativeName>
        <fullName>NADH-ubiquinone oxidoreductase 23 kDa subunit</fullName>
    </alternativeName>
</protein>
<gene>
    <name type="primary">NDUFS8</name>
</gene>
<reference key="1">
    <citation type="journal article" date="2006" name="Gene">
        <title>Adaptive selection of mitochondrial complex I subunits during primate radiation.</title>
        <authorList>
            <person name="Mishmar D."/>
            <person name="Ruiz-Pesini E."/>
            <person name="Mondragon-Palomino M."/>
            <person name="Procaccio V."/>
            <person name="Gaut B."/>
            <person name="Wallace D.C."/>
        </authorList>
    </citation>
    <scope>NUCLEOTIDE SEQUENCE [MRNA]</scope>
</reference>
<accession>Q0MQI3</accession>
<name>NDUS8_PANTR</name>
<comment type="function">
    <text evidence="1">Core subunit of the mitochondrial membrane respiratory chain NADH dehydrogenase (Complex I) which catalyzes electron transfer from NADH through the respiratory chain, using ubiquinone as an electron acceptor (By similarity). Essential for the catalytic activity and assembly of complex I (By similarity).</text>
</comment>
<comment type="catalytic activity">
    <reaction evidence="1">
        <text>a ubiquinone + NADH + 5 H(+)(in) = a ubiquinol + NAD(+) + 4 H(+)(out)</text>
        <dbReference type="Rhea" id="RHEA:29091"/>
        <dbReference type="Rhea" id="RHEA-COMP:9565"/>
        <dbReference type="Rhea" id="RHEA-COMP:9566"/>
        <dbReference type="ChEBI" id="CHEBI:15378"/>
        <dbReference type="ChEBI" id="CHEBI:16389"/>
        <dbReference type="ChEBI" id="CHEBI:17976"/>
        <dbReference type="ChEBI" id="CHEBI:57540"/>
        <dbReference type="ChEBI" id="CHEBI:57945"/>
        <dbReference type="EC" id="7.1.1.2"/>
    </reaction>
</comment>
<comment type="cofactor">
    <cofactor evidence="3">
        <name>[4Fe-4S] cluster</name>
        <dbReference type="ChEBI" id="CHEBI:49883"/>
    </cofactor>
    <text evidence="3">Binds 2 [4Fe-4S] cluster.</text>
</comment>
<comment type="subunit">
    <text evidence="1 2">Core subunit of respiratory chain NADH dehydrogenase (Complex I) which is composed of 45 different subunits (By similarity). This is a component of the iron-sulfur (IP) fragment of the enzyme (By similarity). Interacts with RAB5IF (By similarity).</text>
</comment>
<comment type="subcellular location">
    <subcellularLocation>
        <location evidence="2">Mitochondrion inner membrane</location>
        <topology evidence="2">Peripheral membrane protein</topology>
        <orientation evidence="2">Matrix side</orientation>
    </subcellularLocation>
</comment>
<comment type="similarity">
    <text evidence="6">Belongs to the complex I 23 kDa subunit family.</text>
</comment>
<dbReference type="EC" id="7.1.1.2" evidence="1"/>
<dbReference type="EMBL" id="DQ885651">
    <property type="protein sequence ID" value="ABH12160.1"/>
    <property type="molecule type" value="mRNA"/>
</dbReference>
<dbReference type="RefSeq" id="NP_001065248.1">
    <property type="nucleotide sequence ID" value="NM_001071780.1"/>
</dbReference>
<dbReference type="RefSeq" id="XP_016775310.1">
    <property type="nucleotide sequence ID" value="XM_016919821.3"/>
</dbReference>
<dbReference type="RefSeq" id="XP_016775311.1">
    <property type="nucleotide sequence ID" value="XM_016919822.4"/>
</dbReference>
<dbReference type="RefSeq" id="XP_016775312.1">
    <property type="nucleotide sequence ID" value="XM_016919823.3"/>
</dbReference>
<dbReference type="RefSeq" id="XP_016775313.1">
    <property type="nucleotide sequence ID" value="XM_016919824.3"/>
</dbReference>
<dbReference type="SMR" id="Q0MQI3"/>
<dbReference type="FunCoup" id="Q0MQI3">
    <property type="interactions" value="1745"/>
</dbReference>
<dbReference type="STRING" id="9598.ENSPTRP00000054355"/>
<dbReference type="Ensembl" id="ENSPTRT00000061813.3">
    <property type="protein sequence ID" value="ENSPTRP00000054355.3"/>
    <property type="gene ID" value="ENSPTRG00000003978.6"/>
</dbReference>
<dbReference type="GeneID" id="451375"/>
<dbReference type="KEGG" id="ptr:451375"/>
<dbReference type="CTD" id="4728"/>
<dbReference type="VGNC" id="VGNC:50384">
    <property type="gene designation" value="NDUFS8"/>
</dbReference>
<dbReference type="GeneTree" id="ENSGT00390000003049"/>
<dbReference type="InParanoid" id="Q0MQI3"/>
<dbReference type="OMA" id="WYPDFFR"/>
<dbReference type="OrthoDB" id="10207at9604"/>
<dbReference type="Proteomes" id="UP000002277">
    <property type="component" value="Chromosome 11"/>
</dbReference>
<dbReference type="Bgee" id="ENSPTRG00000003978">
    <property type="expression patterns" value="Expressed in hindlimb stylopod muscle and 21 other cell types or tissues"/>
</dbReference>
<dbReference type="GO" id="GO:0005743">
    <property type="term" value="C:mitochondrial inner membrane"/>
    <property type="evidence" value="ECO:0000250"/>
    <property type="project" value="UniProtKB"/>
</dbReference>
<dbReference type="GO" id="GO:0005739">
    <property type="term" value="C:mitochondrion"/>
    <property type="evidence" value="ECO:0000250"/>
    <property type="project" value="UniProtKB"/>
</dbReference>
<dbReference type="GO" id="GO:0045271">
    <property type="term" value="C:respiratory chain complex I"/>
    <property type="evidence" value="ECO:0000250"/>
    <property type="project" value="UniProtKB"/>
</dbReference>
<dbReference type="GO" id="GO:0051539">
    <property type="term" value="F:4 iron, 4 sulfur cluster binding"/>
    <property type="evidence" value="ECO:0007669"/>
    <property type="project" value="UniProtKB-KW"/>
</dbReference>
<dbReference type="GO" id="GO:0046872">
    <property type="term" value="F:metal ion binding"/>
    <property type="evidence" value="ECO:0007669"/>
    <property type="project" value="UniProtKB-KW"/>
</dbReference>
<dbReference type="GO" id="GO:0008137">
    <property type="term" value="F:NADH dehydrogenase (ubiquinone) activity"/>
    <property type="evidence" value="ECO:0000250"/>
    <property type="project" value="UniProtKB"/>
</dbReference>
<dbReference type="GO" id="GO:0006120">
    <property type="term" value="P:mitochondrial electron transport, NADH to ubiquinone"/>
    <property type="evidence" value="ECO:0000250"/>
    <property type="project" value="UniProtKB"/>
</dbReference>
<dbReference type="GO" id="GO:0032981">
    <property type="term" value="P:mitochondrial respiratory chain complex I assembly"/>
    <property type="evidence" value="ECO:0000250"/>
    <property type="project" value="UniProtKB"/>
</dbReference>
<dbReference type="FunFam" id="3.30.70.3270:FF:000001">
    <property type="entry name" value="NADH-quinone oxidoreductase subunit I 1"/>
    <property type="match status" value="1"/>
</dbReference>
<dbReference type="Gene3D" id="3.30.70.3270">
    <property type="match status" value="1"/>
</dbReference>
<dbReference type="HAMAP" id="MF_01351">
    <property type="entry name" value="NDH1_NuoI"/>
    <property type="match status" value="1"/>
</dbReference>
<dbReference type="InterPro" id="IPR017896">
    <property type="entry name" value="4Fe4S_Fe-S-bd"/>
</dbReference>
<dbReference type="InterPro" id="IPR017900">
    <property type="entry name" value="4Fe4S_Fe_S_CS"/>
</dbReference>
<dbReference type="InterPro" id="IPR010226">
    <property type="entry name" value="NADH_quinone_OxRdtase_chainI"/>
</dbReference>
<dbReference type="NCBIfam" id="TIGR01971">
    <property type="entry name" value="NuoI"/>
    <property type="match status" value="1"/>
</dbReference>
<dbReference type="NCBIfam" id="NF004538">
    <property type="entry name" value="PRK05888.1-4"/>
    <property type="match status" value="1"/>
</dbReference>
<dbReference type="NCBIfam" id="NF004539">
    <property type="entry name" value="PRK05888.1-5"/>
    <property type="match status" value="1"/>
</dbReference>
<dbReference type="PANTHER" id="PTHR10849:SF20">
    <property type="entry name" value="NADH DEHYDROGENASE [UBIQUINONE] IRON-SULFUR PROTEIN 8, MITOCHONDRIAL"/>
    <property type="match status" value="1"/>
</dbReference>
<dbReference type="PANTHER" id="PTHR10849">
    <property type="entry name" value="NADH DEHYDROGENASE UBIQUINONE IRON-SULFUR PROTEIN 8, MITOCHONDRIAL"/>
    <property type="match status" value="1"/>
</dbReference>
<dbReference type="Pfam" id="PF12838">
    <property type="entry name" value="Fer4_7"/>
    <property type="match status" value="1"/>
</dbReference>
<dbReference type="SUPFAM" id="SSF54862">
    <property type="entry name" value="4Fe-4S ferredoxins"/>
    <property type="match status" value="1"/>
</dbReference>
<dbReference type="PROSITE" id="PS00198">
    <property type="entry name" value="4FE4S_FER_1"/>
    <property type="match status" value="2"/>
</dbReference>
<dbReference type="PROSITE" id="PS51379">
    <property type="entry name" value="4FE4S_FER_2"/>
    <property type="match status" value="2"/>
</dbReference>
<proteinExistence type="evidence at transcript level"/>
<sequence>MRCLTTPMLLRALAQAARAGPPGGRSLHSSAVAATYKYVNMQDPEMDMKSVTDRAARTLLWTELFRGLGMTLSYLFREPATINYPFEKGPLSPRFRGEHALRRYPSGEERCIACKLCEAICPAQAITIEAEPRADGSRRTTRYDIDMTKCIYCGFCQEACPVDAIVEGPNFEFSTETHEELLYNKEKLLNNGDKWEAEIAANIQADYLYR</sequence>
<feature type="transit peptide" description="Mitochondrion" evidence="4">
    <location>
        <begin position="1"/>
        <end position="34"/>
    </location>
</feature>
<feature type="chain" id="PRO_0000251875" description="NADH dehydrogenase [ubiquinone] iron-sulfur protein 8, mitochondrial">
    <location>
        <begin position="35"/>
        <end position="210"/>
    </location>
</feature>
<feature type="domain" description="4Fe-4S ferredoxin-type 1" evidence="5">
    <location>
        <begin position="102"/>
        <end position="131"/>
    </location>
</feature>
<feature type="domain" description="4Fe-4S ferredoxin-type 2" evidence="5">
    <location>
        <begin position="141"/>
        <end position="170"/>
    </location>
</feature>
<feature type="binding site" evidence="5">
    <location>
        <position position="111"/>
    </location>
    <ligand>
        <name>[4Fe-4S] cluster</name>
        <dbReference type="ChEBI" id="CHEBI:49883"/>
        <label>1</label>
    </ligand>
</feature>
<feature type="binding site" evidence="5">
    <location>
        <position position="114"/>
    </location>
    <ligand>
        <name>[4Fe-4S] cluster</name>
        <dbReference type="ChEBI" id="CHEBI:49883"/>
        <label>1</label>
    </ligand>
</feature>
<feature type="binding site" evidence="5">
    <location>
        <position position="117"/>
    </location>
    <ligand>
        <name>[4Fe-4S] cluster</name>
        <dbReference type="ChEBI" id="CHEBI:49883"/>
        <label>1</label>
    </ligand>
</feature>
<feature type="binding site" evidence="5">
    <location>
        <position position="121"/>
    </location>
    <ligand>
        <name>[4Fe-4S] cluster</name>
        <dbReference type="ChEBI" id="CHEBI:49883"/>
        <label>2</label>
    </ligand>
</feature>
<feature type="binding site" evidence="5">
    <location>
        <position position="150"/>
    </location>
    <ligand>
        <name>[4Fe-4S] cluster</name>
        <dbReference type="ChEBI" id="CHEBI:49883"/>
        <label>2</label>
    </ligand>
</feature>
<feature type="binding site" evidence="5">
    <location>
        <position position="153"/>
    </location>
    <ligand>
        <name>[4Fe-4S] cluster</name>
        <dbReference type="ChEBI" id="CHEBI:49883"/>
        <label>2</label>
    </ligand>
</feature>
<feature type="binding site" evidence="5">
    <location>
        <position position="156"/>
    </location>
    <ligand>
        <name>[4Fe-4S] cluster</name>
        <dbReference type="ChEBI" id="CHEBI:49883"/>
        <label>2</label>
    </ligand>
</feature>
<feature type="binding site" evidence="5">
    <location>
        <position position="160"/>
    </location>
    <ligand>
        <name>[4Fe-4S] cluster</name>
        <dbReference type="ChEBI" id="CHEBI:49883"/>
        <label>1</label>
    </ligand>
</feature>